<sequence>MGMATYAVVDLETTGNQLDFDDIIQIGITFVRNIQIIDTYHSMIRTNLEIPPFIQALTSIEENMLQQAPYFNQVAQGIYDNMKDCIFVAHNVDFDLNFIKKAFKDCNIQYRPKRVIDTLEIFKIAFPTDKSYQLSELAEAHGITLANAHRADEDAATTAKLMILAFEKFEKLPLDTLKQLYYLSKQLKYDLYDIFFEMVRQYDAKPLAKSYEKFEQIIYRKQVDFKKPTTNYNGSLKSLYSKAVDQLGLTYRPQQLYLAETILDQLMHSEKAMIEASLGSGKSLAYLLAALMYNIETGKHVMISTNTKLLQSQLLEKDIPAMNEALNFKINALLIKSKSDYISLGLISQILKDDTSNYEVNILKMQLLIWITETPSGDIQELNLKGGQKMYFDQKIETYVPARHDVHYYNFIKRNAQNIQIGITNHAHLIHSDVENSIYQLFDDCIVDEAHRLPDYALNQVTNELSYADIKYQLGLIGKNENEKLLKAIDQLEKQRILEKLDIAPIDIFGLKASMNEIHELNEQLFSTIFTIINDSDVYDDDIHRFHNVFTFETKDILKDLHAIIDKLNKTLEIFNGISHKTVKSLRKQLLYLKDKFKNIEQSLKAGHTSFISIKNLSQKSTIRLYVKDYAVKDVLTKQVLEKFKSLIFISGTLKFNHSFDAFKQLFNKDVHFNTFEVNTSLQSAKNTSVFIPSDVASYQYKNIDEYVASIVSYIIEYTTITSSKCLVLFTSYKMMHMVQDMLNELPEFEDYVVLTQQQNQNYKIVQQFNNFDKAILLGTSTFFEGFDFQANGIKCVMIAKLPFMNKHNAKYWLMDSEFTSTFKEYVLPDAVTRFRQGLGRLIRNENDRGIIVSFDDRLINSNYKNIFEQTLENYRQKKGDIQQFGKLLRQIQKKKK</sequence>
<reference key="1">
    <citation type="journal article" date="2007" name="PLoS ONE">
        <title>Molecular correlates of host specialization in Staphylococcus aureus.</title>
        <authorList>
            <person name="Herron-Olson L."/>
            <person name="Fitzgerald J.R."/>
            <person name="Musser J.M."/>
            <person name="Kapur V."/>
        </authorList>
    </citation>
    <scope>NUCLEOTIDE SEQUENCE [LARGE SCALE GENOMIC DNA]</scope>
    <source>
        <strain>bovine RF122 / ET3-1</strain>
    </source>
</reference>
<gene>
    <name evidence="1" type="primary">dinG</name>
    <name type="ordered locus">SAB1319c</name>
</gene>
<organism>
    <name type="scientific">Staphylococcus aureus (strain bovine RF122 / ET3-1)</name>
    <dbReference type="NCBI Taxonomy" id="273036"/>
    <lineage>
        <taxon>Bacteria</taxon>
        <taxon>Bacillati</taxon>
        <taxon>Bacillota</taxon>
        <taxon>Bacilli</taxon>
        <taxon>Bacillales</taxon>
        <taxon>Staphylococcaceae</taxon>
        <taxon>Staphylococcus</taxon>
    </lineage>
</organism>
<name>DING_STAAB</name>
<dbReference type="EC" id="3.1.-.-" evidence="1"/>
<dbReference type="EMBL" id="AJ938182">
    <property type="protein sequence ID" value="CAI81008.1"/>
    <property type="molecule type" value="Genomic_DNA"/>
</dbReference>
<dbReference type="RefSeq" id="WP_000525055.1">
    <property type="nucleotide sequence ID" value="NC_007622.1"/>
</dbReference>
<dbReference type="SMR" id="Q2YY51"/>
<dbReference type="KEGG" id="sab:SAB1319c"/>
<dbReference type="HOGENOM" id="CLU_012117_1_1_9"/>
<dbReference type="GO" id="GO:0005829">
    <property type="term" value="C:cytosol"/>
    <property type="evidence" value="ECO:0007669"/>
    <property type="project" value="TreeGrafter"/>
</dbReference>
<dbReference type="GO" id="GO:0008408">
    <property type="term" value="F:3'-5' exonuclease activity"/>
    <property type="evidence" value="ECO:0007669"/>
    <property type="project" value="UniProtKB-UniRule"/>
</dbReference>
<dbReference type="GO" id="GO:0005524">
    <property type="term" value="F:ATP binding"/>
    <property type="evidence" value="ECO:0007669"/>
    <property type="project" value="UniProtKB-UniRule"/>
</dbReference>
<dbReference type="GO" id="GO:0003677">
    <property type="term" value="F:DNA binding"/>
    <property type="evidence" value="ECO:0007669"/>
    <property type="project" value="InterPro"/>
</dbReference>
<dbReference type="GO" id="GO:0003887">
    <property type="term" value="F:DNA-directed DNA polymerase activity"/>
    <property type="evidence" value="ECO:0007669"/>
    <property type="project" value="InterPro"/>
</dbReference>
<dbReference type="GO" id="GO:0004386">
    <property type="term" value="F:helicase activity"/>
    <property type="evidence" value="ECO:0007669"/>
    <property type="project" value="InterPro"/>
</dbReference>
<dbReference type="GO" id="GO:0016818">
    <property type="term" value="F:hydrolase activity, acting on acid anhydrides, in phosphorus-containing anhydrides"/>
    <property type="evidence" value="ECO:0007669"/>
    <property type="project" value="InterPro"/>
</dbReference>
<dbReference type="GO" id="GO:0045004">
    <property type="term" value="P:DNA replication proofreading"/>
    <property type="evidence" value="ECO:0007669"/>
    <property type="project" value="TreeGrafter"/>
</dbReference>
<dbReference type="CDD" id="cd06127">
    <property type="entry name" value="DEDDh"/>
    <property type="match status" value="1"/>
</dbReference>
<dbReference type="FunFam" id="3.30.420.10:FF:000045">
    <property type="entry name" value="3'-5' exonuclease DinG"/>
    <property type="match status" value="1"/>
</dbReference>
<dbReference type="FunFam" id="3.40.50.300:FF:001816">
    <property type="entry name" value="3'-5' exonuclease DinG"/>
    <property type="match status" value="1"/>
</dbReference>
<dbReference type="FunFam" id="3.40.50.300:FF:000437">
    <property type="entry name" value="ATP-dependent DNA helicase DinG"/>
    <property type="match status" value="1"/>
</dbReference>
<dbReference type="Gene3D" id="3.40.50.300">
    <property type="entry name" value="P-loop containing nucleotide triphosphate hydrolases"/>
    <property type="match status" value="2"/>
</dbReference>
<dbReference type="Gene3D" id="3.30.420.10">
    <property type="entry name" value="Ribonuclease H-like superfamily/Ribonuclease H"/>
    <property type="match status" value="1"/>
</dbReference>
<dbReference type="HAMAP" id="MF_02206">
    <property type="entry name" value="DinG_exonucl"/>
    <property type="match status" value="1"/>
</dbReference>
<dbReference type="InterPro" id="IPR006555">
    <property type="entry name" value="ATP-dep_Helicase_C"/>
</dbReference>
<dbReference type="InterPro" id="IPR006310">
    <property type="entry name" value="DinG"/>
</dbReference>
<dbReference type="InterPro" id="IPR006054">
    <property type="entry name" value="DnaQ"/>
</dbReference>
<dbReference type="InterPro" id="IPR013520">
    <property type="entry name" value="Exonuclease_RNaseT/DNA_pol3"/>
</dbReference>
<dbReference type="InterPro" id="IPR014013">
    <property type="entry name" value="Helic_SF1/SF2_ATP-bd_DinG/Rad3"/>
</dbReference>
<dbReference type="InterPro" id="IPR027417">
    <property type="entry name" value="P-loop_NTPase"/>
</dbReference>
<dbReference type="InterPro" id="IPR012337">
    <property type="entry name" value="RNaseH-like_sf"/>
</dbReference>
<dbReference type="InterPro" id="IPR036397">
    <property type="entry name" value="RNaseH_sf"/>
</dbReference>
<dbReference type="NCBIfam" id="TIGR01407">
    <property type="entry name" value="dinG_rel"/>
    <property type="match status" value="1"/>
</dbReference>
<dbReference type="NCBIfam" id="TIGR00573">
    <property type="entry name" value="dnaq"/>
    <property type="match status" value="1"/>
</dbReference>
<dbReference type="PANTHER" id="PTHR30231">
    <property type="entry name" value="DNA POLYMERASE III SUBUNIT EPSILON"/>
    <property type="match status" value="1"/>
</dbReference>
<dbReference type="PANTHER" id="PTHR30231:SF41">
    <property type="entry name" value="DNA POLYMERASE III SUBUNIT EPSILON"/>
    <property type="match status" value="1"/>
</dbReference>
<dbReference type="Pfam" id="PF13307">
    <property type="entry name" value="Helicase_C_2"/>
    <property type="match status" value="1"/>
</dbReference>
<dbReference type="Pfam" id="PF00929">
    <property type="entry name" value="RNase_T"/>
    <property type="match status" value="1"/>
</dbReference>
<dbReference type="SMART" id="SM00479">
    <property type="entry name" value="EXOIII"/>
    <property type="match status" value="1"/>
</dbReference>
<dbReference type="SMART" id="SM00491">
    <property type="entry name" value="HELICc2"/>
    <property type="match status" value="1"/>
</dbReference>
<dbReference type="SUPFAM" id="SSF52540">
    <property type="entry name" value="P-loop containing nucleoside triphosphate hydrolases"/>
    <property type="match status" value="1"/>
</dbReference>
<dbReference type="SUPFAM" id="SSF53098">
    <property type="entry name" value="Ribonuclease H-like"/>
    <property type="match status" value="1"/>
</dbReference>
<dbReference type="PROSITE" id="PS51193">
    <property type="entry name" value="HELICASE_ATP_BIND_2"/>
    <property type="match status" value="1"/>
</dbReference>
<dbReference type="PROSITE" id="PS51194">
    <property type="entry name" value="HELICASE_CTER"/>
    <property type="match status" value="1"/>
</dbReference>
<feature type="chain" id="PRO_0000277592" description="3'-5' exonuclease DinG">
    <location>
        <begin position="1"/>
        <end position="897"/>
    </location>
</feature>
<feature type="domain" description="Exonuclease" evidence="1">
    <location>
        <begin position="8"/>
        <end position="161"/>
    </location>
</feature>
<feature type="domain" description="Helicase ATP-binding" evidence="1">
    <location>
        <begin position="241"/>
        <end position="496"/>
    </location>
</feature>
<feature type="domain" description="Helicase C-terminal" evidence="1">
    <location>
        <begin position="703"/>
        <end position="883"/>
    </location>
</feature>
<feature type="short sequence motif" description="DEAH box" evidence="1">
    <location>
        <begin position="448"/>
        <end position="451"/>
    </location>
</feature>
<feature type="binding site" evidence="1">
    <location>
        <begin position="276"/>
        <end position="283"/>
    </location>
    <ligand>
        <name>ATP</name>
        <dbReference type="ChEBI" id="CHEBI:30616"/>
    </ligand>
</feature>
<keyword id="KW-0067">ATP-binding</keyword>
<keyword id="KW-0269">Exonuclease</keyword>
<keyword id="KW-0378">Hydrolase</keyword>
<keyword id="KW-0540">Nuclease</keyword>
<keyword id="KW-0547">Nucleotide-binding</keyword>
<evidence type="ECO:0000255" key="1">
    <source>
        <dbReference type="HAMAP-Rule" id="MF_02206"/>
    </source>
</evidence>
<accession>Q2YY51</accession>
<protein>
    <recommendedName>
        <fullName evidence="1">3'-5' exonuclease DinG</fullName>
        <ecNumber evidence="1">3.1.-.-</ecNumber>
    </recommendedName>
</protein>
<comment type="function">
    <text evidence="1">3'-5' exonuclease.</text>
</comment>
<comment type="similarity">
    <text evidence="1">Belongs to the helicase family. DinG subfamily. Type 2 sub-subfamily.</text>
</comment>
<proteinExistence type="inferred from homology"/>